<gene>
    <name evidence="1" type="primary">alaS</name>
    <name type="ordered locus">LMOf2365_1523</name>
</gene>
<feature type="chain" id="PRO_0000075140" description="Alanine--tRNA ligase">
    <location>
        <begin position="1"/>
        <end position="879"/>
    </location>
</feature>
<feature type="binding site" evidence="1">
    <location>
        <position position="566"/>
    </location>
    <ligand>
        <name>Zn(2+)</name>
        <dbReference type="ChEBI" id="CHEBI:29105"/>
    </ligand>
</feature>
<feature type="binding site" evidence="1">
    <location>
        <position position="570"/>
    </location>
    <ligand>
        <name>Zn(2+)</name>
        <dbReference type="ChEBI" id="CHEBI:29105"/>
    </ligand>
</feature>
<feature type="binding site" evidence="1">
    <location>
        <position position="668"/>
    </location>
    <ligand>
        <name>Zn(2+)</name>
        <dbReference type="ChEBI" id="CHEBI:29105"/>
    </ligand>
</feature>
<feature type="binding site" evidence="1">
    <location>
        <position position="672"/>
    </location>
    <ligand>
        <name>Zn(2+)</name>
        <dbReference type="ChEBI" id="CHEBI:29105"/>
    </ligand>
</feature>
<accession>Q71ZG6</accession>
<organism>
    <name type="scientific">Listeria monocytogenes serotype 4b (strain F2365)</name>
    <dbReference type="NCBI Taxonomy" id="265669"/>
    <lineage>
        <taxon>Bacteria</taxon>
        <taxon>Bacillati</taxon>
        <taxon>Bacillota</taxon>
        <taxon>Bacilli</taxon>
        <taxon>Bacillales</taxon>
        <taxon>Listeriaceae</taxon>
        <taxon>Listeria</taxon>
    </lineage>
</organism>
<protein>
    <recommendedName>
        <fullName evidence="1">Alanine--tRNA ligase</fullName>
        <ecNumber evidence="1">6.1.1.7</ecNumber>
    </recommendedName>
    <alternativeName>
        <fullName evidence="1">Alanyl-tRNA synthetase</fullName>
        <shortName evidence="1">AlaRS</shortName>
    </alternativeName>
</protein>
<keyword id="KW-0030">Aminoacyl-tRNA synthetase</keyword>
<keyword id="KW-0067">ATP-binding</keyword>
<keyword id="KW-0963">Cytoplasm</keyword>
<keyword id="KW-0436">Ligase</keyword>
<keyword id="KW-0479">Metal-binding</keyword>
<keyword id="KW-0547">Nucleotide-binding</keyword>
<keyword id="KW-0648">Protein biosynthesis</keyword>
<keyword id="KW-0694">RNA-binding</keyword>
<keyword id="KW-0820">tRNA-binding</keyword>
<keyword id="KW-0862">Zinc</keyword>
<sequence>MKQLSSAEVRQLFLDFFKEKGHTIEPSAPLVPNNDPTILWINSGVATMKKYFDGSVIPDNPRMANAQKSIRTNDIENVGKTARHHTFFEMLGNFSIGDYFKEGAIVFAWEFLTSPKWIGFDPDKLYVTVYPEDEEAKTLWREKIGLSDDHIVEIEDNFWDIGIGPSGPDSEIFYDRGPAFGDDASDPELYPGGENERYLEIWNLVFSQFNHNPDGTYTPLPKQNIDTGMGLERMVSIIQDAPTNFETDLFMPIIREVEQIAGVKYGHSQENDVAFKVIADHIRTVAFAIGDGALPSNEGRGYILRRLLRRAVRYAKVLTINEPFMYKLVPVVGKIMNSFYPEVENQTDFIQKVIRTEEERFHETLNEGLAILETILKTAKETNEQIIKGADIFKLYDTFGFPVELTEEYAEDHGLKVDHAGFEAEMKEQRDRARSARADVKSMQVQGELLANLTEKSAFVGYNSTEHVSEILYLIQDDTLVEEVAAGSEAQVIFKETPFYAESGGQVADKGTIESETGLAYVEDVQKAPNKQNLHRISVKEGVLKTGDTVKLAVDKVKRRETIKNHTATHLLHRALKDTLGEHVNQAGSLVSPDRLRFDFSHFGQITEEELTKLEEIVNEKIWEQINVVIEEMPIAEAKELGAMALFGEKYGDIVRVVQVGKYSIELCGGVHVRNTADIGLFKIVSETGIGAGTRRIEAVTGKEAYRFVTEQENTLKQAASLLKTTTKETPQKVEQLQADLREVKRENESLLSKLASAASADIFESPEEIGGVKVIAKQVNAKDMNQLRQFVDNWKDKKIGGILVLGAVQGDKVNLISAVSEEAIKAGYHAGKLLKEVATRCGGNGGGRPDMAQAGGKNPAELGTALDYVSTWVKEQQA</sequence>
<comment type="function">
    <text evidence="1">Catalyzes the attachment of alanine to tRNA(Ala) in a two-step reaction: alanine is first activated by ATP to form Ala-AMP and then transferred to the acceptor end of tRNA(Ala). Also edits incorrectly charged Ser-tRNA(Ala) and Gly-tRNA(Ala) via its editing domain.</text>
</comment>
<comment type="catalytic activity">
    <reaction evidence="1">
        <text>tRNA(Ala) + L-alanine + ATP = L-alanyl-tRNA(Ala) + AMP + diphosphate</text>
        <dbReference type="Rhea" id="RHEA:12540"/>
        <dbReference type="Rhea" id="RHEA-COMP:9657"/>
        <dbReference type="Rhea" id="RHEA-COMP:9923"/>
        <dbReference type="ChEBI" id="CHEBI:30616"/>
        <dbReference type="ChEBI" id="CHEBI:33019"/>
        <dbReference type="ChEBI" id="CHEBI:57972"/>
        <dbReference type="ChEBI" id="CHEBI:78442"/>
        <dbReference type="ChEBI" id="CHEBI:78497"/>
        <dbReference type="ChEBI" id="CHEBI:456215"/>
        <dbReference type="EC" id="6.1.1.7"/>
    </reaction>
</comment>
<comment type="cofactor">
    <cofactor evidence="1">
        <name>Zn(2+)</name>
        <dbReference type="ChEBI" id="CHEBI:29105"/>
    </cofactor>
    <text evidence="1">Binds 1 zinc ion per subunit.</text>
</comment>
<comment type="subcellular location">
    <subcellularLocation>
        <location evidence="1">Cytoplasm</location>
    </subcellularLocation>
</comment>
<comment type="domain">
    <text evidence="1">Consists of three domains; the N-terminal catalytic domain, the editing domain and the C-terminal C-Ala domain. The editing domain removes incorrectly charged amino acids, while the C-Ala domain, along with tRNA(Ala), serves as a bridge to cooperatively bring together the editing and aminoacylation centers thus stimulating deacylation of misacylated tRNAs.</text>
</comment>
<comment type="similarity">
    <text evidence="1">Belongs to the class-II aminoacyl-tRNA synthetase family.</text>
</comment>
<name>SYA_LISMF</name>
<proteinExistence type="inferred from homology"/>
<dbReference type="EC" id="6.1.1.7" evidence="1"/>
<dbReference type="EMBL" id="AE017262">
    <property type="protein sequence ID" value="AAT04298.1"/>
    <property type="molecule type" value="Genomic_DNA"/>
</dbReference>
<dbReference type="RefSeq" id="WP_010958906.1">
    <property type="nucleotide sequence ID" value="NC_002973.6"/>
</dbReference>
<dbReference type="SMR" id="Q71ZG6"/>
<dbReference type="KEGG" id="lmf:LMOf2365_1523"/>
<dbReference type="HOGENOM" id="CLU_004485_1_1_9"/>
<dbReference type="GO" id="GO:0005829">
    <property type="term" value="C:cytosol"/>
    <property type="evidence" value="ECO:0007669"/>
    <property type="project" value="TreeGrafter"/>
</dbReference>
<dbReference type="GO" id="GO:0004813">
    <property type="term" value="F:alanine-tRNA ligase activity"/>
    <property type="evidence" value="ECO:0007669"/>
    <property type="project" value="UniProtKB-UniRule"/>
</dbReference>
<dbReference type="GO" id="GO:0002161">
    <property type="term" value="F:aminoacyl-tRNA deacylase activity"/>
    <property type="evidence" value="ECO:0007669"/>
    <property type="project" value="TreeGrafter"/>
</dbReference>
<dbReference type="GO" id="GO:0005524">
    <property type="term" value="F:ATP binding"/>
    <property type="evidence" value="ECO:0007669"/>
    <property type="project" value="UniProtKB-UniRule"/>
</dbReference>
<dbReference type="GO" id="GO:0140096">
    <property type="term" value="F:catalytic activity, acting on a protein"/>
    <property type="evidence" value="ECO:0007669"/>
    <property type="project" value="UniProtKB-ARBA"/>
</dbReference>
<dbReference type="GO" id="GO:0016740">
    <property type="term" value="F:transferase activity"/>
    <property type="evidence" value="ECO:0007669"/>
    <property type="project" value="UniProtKB-ARBA"/>
</dbReference>
<dbReference type="GO" id="GO:0000049">
    <property type="term" value="F:tRNA binding"/>
    <property type="evidence" value="ECO:0007669"/>
    <property type="project" value="UniProtKB-KW"/>
</dbReference>
<dbReference type="GO" id="GO:0008270">
    <property type="term" value="F:zinc ion binding"/>
    <property type="evidence" value="ECO:0007669"/>
    <property type="project" value="UniProtKB-UniRule"/>
</dbReference>
<dbReference type="GO" id="GO:0006419">
    <property type="term" value="P:alanyl-tRNA aminoacylation"/>
    <property type="evidence" value="ECO:0007669"/>
    <property type="project" value="UniProtKB-UniRule"/>
</dbReference>
<dbReference type="CDD" id="cd00673">
    <property type="entry name" value="AlaRS_core"/>
    <property type="match status" value="1"/>
</dbReference>
<dbReference type="FunFam" id="2.40.30.130:FF:000011">
    <property type="entry name" value="Alanine--tRNA ligase"/>
    <property type="match status" value="1"/>
</dbReference>
<dbReference type="FunFam" id="3.10.310.40:FF:000001">
    <property type="entry name" value="Alanine--tRNA ligase"/>
    <property type="match status" value="1"/>
</dbReference>
<dbReference type="FunFam" id="3.30.54.20:FF:000001">
    <property type="entry name" value="Alanine--tRNA ligase"/>
    <property type="match status" value="1"/>
</dbReference>
<dbReference type="FunFam" id="3.30.930.10:FF:000046">
    <property type="entry name" value="Alanine--tRNA ligase"/>
    <property type="match status" value="1"/>
</dbReference>
<dbReference type="FunFam" id="3.30.980.10:FF:000004">
    <property type="entry name" value="Alanine--tRNA ligase, cytoplasmic"/>
    <property type="match status" value="1"/>
</dbReference>
<dbReference type="Gene3D" id="2.40.30.130">
    <property type="match status" value="1"/>
</dbReference>
<dbReference type="Gene3D" id="3.10.310.40">
    <property type="match status" value="1"/>
</dbReference>
<dbReference type="Gene3D" id="3.30.54.20">
    <property type="match status" value="1"/>
</dbReference>
<dbReference type="Gene3D" id="6.10.250.550">
    <property type="match status" value="1"/>
</dbReference>
<dbReference type="Gene3D" id="3.30.930.10">
    <property type="entry name" value="Bira Bifunctional Protein, Domain 2"/>
    <property type="match status" value="1"/>
</dbReference>
<dbReference type="Gene3D" id="3.30.980.10">
    <property type="entry name" value="Threonyl-trna Synthetase, Chain A, domain 2"/>
    <property type="match status" value="1"/>
</dbReference>
<dbReference type="HAMAP" id="MF_00036_B">
    <property type="entry name" value="Ala_tRNA_synth_B"/>
    <property type="match status" value="1"/>
</dbReference>
<dbReference type="InterPro" id="IPR045864">
    <property type="entry name" value="aa-tRNA-synth_II/BPL/LPL"/>
</dbReference>
<dbReference type="InterPro" id="IPR002318">
    <property type="entry name" value="Ala-tRNA-lgiase_IIc"/>
</dbReference>
<dbReference type="InterPro" id="IPR018162">
    <property type="entry name" value="Ala-tRNA-ligase_IIc_anticod-bd"/>
</dbReference>
<dbReference type="InterPro" id="IPR018165">
    <property type="entry name" value="Ala-tRNA-synth_IIc_core"/>
</dbReference>
<dbReference type="InterPro" id="IPR018164">
    <property type="entry name" value="Ala-tRNA-synth_IIc_N"/>
</dbReference>
<dbReference type="InterPro" id="IPR050058">
    <property type="entry name" value="Ala-tRNA_ligase"/>
</dbReference>
<dbReference type="InterPro" id="IPR023033">
    <property type="entry name" value="Ala_tRNA_ligase_euk/bac"/>
</dbReference>
<dbReference type="InterPro" id="IPR003156">
    <property type="entry name" value="DHHA1_dom"/>
</dbReference>
<dbReference type="InterPro" id="IPR018163">
    <property type="entry name" value="Thr/Ala-tRNA-synth_IIc_edit"/>
</dbReference>
<dbReference type="InterPro" id="IPR009000">
    <property type="entry name" value="Transl_B-barrel_sf"/>
</dbReference>
<dbReference type="InterPro" id="IPR012947">
    <property type="entry name" value="tRNA_SAD"/>
</dbReference>
<dbReference type="NCBIfam" id="TIGR00344">
    <property type="entry name" value="alaS"/>
    <property type="match status" value="1"/>
</dbReference>
<dbReference type="PANTHER" id="PTHR11777:SF9">
    <property type="entry name" value="ALANINE--TRNA LIGASE, CYTOPLASMIC"/>
    <property type="match status" value="1"/>
</dbReference>
<dbReference type="PANTHER" id="PTHR11777">
    <property type="entry name" value="ALANYL-TRNA SYNTHETASE"/>
    <property type="match status" value="1"/>
</dbReference>
<dbReference type="Pfam" id="PF02272">
    <property type="entry name" value="DHHA1"/>
    <property type="match status" value="1"/>
</dbReference>
<dbReference type="Pfam" id="PF01411">
    <property type="entry name" value="tRNA-synt_2c"/>
    <property type="match status" value="1"/>
</dbReference>
<dbReference type="Pfam" id="PF07973">
    <property type="entry name" value="tRNA_SAD"/>
    <property type="match status" value="1"/>
</dbReference>
<dbReference type="PRINTS" id="PR00980">
    <property type="entry name" value="TRNASYNTHALA"/>
</dbReference>
<dbReference type="SMART" id="SM00863">
    <property type="entry name" value="tRNA_SAD"/>
    <property type="match status" value="1"/>
</dbReference>
<dbReference type="SUPFAM" id="SSF55681">
    <property type="entry name" value="Class II aaRS and biotin synthetases"/>
    <property type="match status" value="1"/>
</dbReference>
<dbReference type="SUPFAM" id="SSF101353">
    <property type="entry name" value="Putative anticodon-binding domain of alanyl-tRNA synthetase (AlaRS)"/>
    <property type="match status" value="1"/>
</dbReference>
<dbReference type="SUPFAM" id="SSF55186">
    <property type="entry name" value="ThrRS/AlaRS common domain"/>
    <property type="match status" value="1"/>
</dbReference>
<dbReference type="SUPFAM" id="SSF50447">
    <property type="entry name" value="Translation proteins"/>
    <property type="match status" value="1"/>
</dbReference>
<dbReference type="PROSITE" id="PS50860">
    <property type="entry name" value="AA_TRNA_LIGASE_II_ALA"/>
    <property type="match status" value="1"/>
</dbReference>
<evidence type="ECO:0000255" key="1">
    <source>
        <dbReference type="HAMAP-Rule" id="MF_00036"/>
    </source>
</evidence>
<reference key="1">
    <citation type="journal article" date="2004" name="Nucleic Acids Res.">
        <title>Whole genome comparisons of serotype 4b and 1/2a strains of the food-borne pathogen Listeria monocytogenes reveal new insights into the core genome components of this species.</title>
        <authorList>
            <person name="Nelson K.E."/>
            <person name="Fouts D.E."/>
            <person name="Mongodin E.F."/>
            <person name="Ravel J."/>
            <person name="DeBoy R.T."/>
            <person name="Kolonay J.F."/>
            <person name="Rasko D.A."/>
            <person name="Angiuoli S.V."/>
            <person name="Gill S.R."/>
            <person name="Paulsen I.T."/>
            <person name="Peterson J.D."/>
            <person name="White O."/>
            <person name="Nelson W.C."/>
            <person name="Nierman W.C."/>
            <person name="Beanan M.J."/>
            <person name="Brinkac L.M."/>
            <person name="Daugherty S.C."/>
            <person name="Dodson R.J."/>
            <person name="Durkin A.S."/>
            <person name="Madupu R."/>
            <person name="Haft D.H."/>
            <person name="Selengut J."/>
            <person name="Van Aken S.E."/>
            <person name="Khouri H.M."/>
            <person name="Fedorova N."/>
            <person name="Forberger H.A."/>
            <person name="Tran B."/>
            <person name="Kathariou S."/>
            <person name="Wonderling L.D."/>
            <person name="Uhlich G.A."/>
            <person name="Bayles D.O."/>
            <person name="Luchansky J.B."/>
            <person name="Fraser C.M."/>
        </authorList>
    </citation>
    <scope>NUCLEOTIDE SEQUENCE [LARGE SCALE GENOMIC DNA]</scope>
    <source>
        <strain>F2365</strain>
    </source>
</reference>